<feature type="chain" id="PRO_0000345624" description="Rho guanine nucleotide exchange factor 2">
    <location>
        <begin position="1"/>
        <end position="985"/>
    </location>
</feature>
<feature type="domain" description="DH" evidence="6">
    <location>
        <begin position="236"/>
        <end position="433"/>
    </location>
</feature>
<feature type="domain" description="PH" evidence="7">
    <location>
        <begin position="473"/>
        <end position="572"/>
    </location>
</feature>
<feature type="zinc finger region" description="Phorbol-ester/DAG-type" evidence="8">
    <location>
        <begin position="39"/>
        <end position="86"/>
    </location>
</feature>
<feature type="region of interest" description="Disordered" evidence="9">
    <location>
        <begin position="1"/>
        <end position="32"/>
    </location>
</feature>
<feature type="region of interest" description="Interaction with DYNLT1" evidence="3">
    <location>
        <begin position="131"/>
        <end position="161"/>
    </location>
</feature>
<feature type="region of interest" description="Disordered" evidence="9">
    <location>
        <begin position="890"/>
        <end position="909"/>
    </location>
</feature>
<feature type="region of interest" description="Disordered" evidence="9">
    <location>
        <begin position="918"/>
        <end position="985"/>
    </location>
</feature>
<feature type="coiled-coil region" evidence="5">
    <location>
        <begin position="591"/>
        <end position="615"/>
    </location>
</feature>
<feature type="coiled-coil region" evidence="5">
    <location>
        <begin position="797"/>
        <end position="866"/>
    </location>
</feature>
<feature type="compositionally biased region" description="Basic and acidic residues" evidence="9">
    <location>
        <begin position="919"/>
        <end position="938"/>
    </location>
</feature>
<feature type="compositionally biased region" description="Acidic residues" evidence="9">
    <location>
        <begin position="940"/>
        <end position="949"/>
    </location>
</feature>
<feature type="modified residue" description="Phosphoserine" evidence="4">
    <location>
        <position position="109"/>
    </location>
</feature>
<feature type="modified residue" description="Phosphoserine" evidence="4">
    <location>
        <position position="122"/>
    </location>
</feature>
<feature type="modified residue" description="Phosphoserine" evidence="4">
    <location>
        <position position="129"/>
    </location>
</feature>
<feature type="modified residue" description="Phosphoserine" evidence="4">
    <location>
        <position position="133"/>
    </location>
</feature>
<feature type="modified residue" description="Phosphoserine" evidence="4">
    <location>
        <position position="137"/>
    </location>
</feature>
<feature type="modified residue" description="Phosphoserine; by PAK4" evidence="4">
    <location>
        <position position="143"/>
    </location>
</feature>
<feature type="modified residue" description="Phosphoserine" evidence="10">
    <location>
        <position position="151"/>
    </location>
</feature>
<feature type="modified residue" description="Phosphoserine" evidence="4">
    <location>
        <position position="163"/>
    </location>
</feature>
<feature type="modified residue" description="Phosphoserine" evidence="4">
    <location>
        <position position="172"/>
    </location>
</feature>
<feature type="modified residue" description="Phosphoserine" evidence="10">
    <location>
        <position position="174"/>
    </location>
</feature>
<feature type="modified residue" description="Phosphoserine" evidence="10">
    <location>
        <position position="177"/>
    </location>
</feature>
<feature type="modified residue" description="N6-acetyllysine" evidence="4">
    <location>
        <position position="354"/>
    </location>
</feature>
<feature type="modified residue" description="Phosphoserine" evidence="10">
    <location>
        <position position="646"/>
    </location>
</feature>
<feature type="modified residue" description="Phosphoserine" evidence="4">
    <location>
        <position position="649"/>
    </location>
</feature>
<feature type="modified residue" description="Phosphothreonine; by MAPK1 or MAPK3" evidence="4">
    <location>
        <position position="680"/>
    </location>
</feature>
<feature type="modified residue" description="Phosphoserine" evidence="4">
    <location>
        <position position="692"/>
    </location>
</feature>
<feature type="modified residue" description="Phosphoserine" evidence="4">
    <location>
        <position position="710"/>
    </location>
</feature>
<feature type="modified residue" description="Phosphoserine" evidence="2">
    <location>
        <position position="781"/>
    </location>
</feature>
<feature type="modified residue" description="Phosphothreonine" evidence="2">
    <location>
        <position position="795"/>
    </location>
</feature>
<feature type="modified residue" description="Phosphoserine" evidence="10">
    <location>
        <position position="885"/>
    </location>
</feature>
<feature type="modified residue" description="Phosphotyrosine" evidence="4">
    <location>
        <position position="893"/>
    </location>
</feature>
<feature type="modified residue" description="Phosphoserine; by PAK4" evidence="4">
    <location>
        <position position="895"/>
    </location>
</feature>
<feature type="modified residue" description="Phosphoserine" evidence="10">
    <location>
        <position position="931"/>
    </location>
</feature>
<feature type="modified residue" description="Phosphoserine" evidence="4">
    <location>
        <position position="939"/>
    </location>
</feature>
<feature type="modified residue" description="Phosphoserine" evidence="4">
    <location>
        <position position="940"/>
    </location>
</feature>
<feature type="modified residue" description="Phosphothreonine" evidence="4">
    <location>
        <position position="944"/>
    </location>
</feature>
<feature type="modified residue" description="Phosphoserine" evidence="4">
    <location>
        <position position="946"/>
    </location>
</feature>
<feature type="modified residue" description="Phosphoserine" evidence="2">
    <location>
        <position position="951"/>
    </location>
</feature>
<feature type="modified residue" description="Phosphoserine" evidence="4">
    <location>
        <position position="952"/>
    </location>
</feature>
<feature type="modified residue" description="Phosphoserine" evidence="10">
    <location>
        <position position="955"/>
    </location>
</feature>
<feature type="modified residue" description="Phosphoserine" evidence="10">
    <location>
        <position position="959"/>
    </location>
</feature>
<keyword id="KW-0007">Acetylation</keyword>
<keyword id="KW-0131">Cell cycle</keyword>
<keyword id="KW-0132">Cell division</keyword>
<keyword id="KW-0965">Cell junction</keyword>
<keyword id="KW-0175">Coiled coil</keyword>
<keyword id="KW-0963">Cytoplasm</keyword>
<keyword id="KW-0968">Cytoplasmic vesicle</keyword>
<keyword id="KW-0206">Cytoskeleton</keyword>
<keyword id="KW-0217">Developmental protein</keyword>
<keyword id="KW-0221">Differentiation</keyword>
<keyword id="KW-0333">Golgi apparatus</keyword>
<keyword id="KW-0344">Guanine-nucleotide releasing factor</keyword>
<keyword id="KW-0391">Immunity</keyword>
<keyword id="KW-0399">Innate immunity</keyword>
<keyword id="KW-0479">Metal-binding</keyword>
<keyword id="KW-0493">Microtubule</keyword>
<keyword id="KW-0498">Mitosis</keyword>
<keyword id="KW-0524">Neurogenesis</keyword>
<keyword id="KW-0597">Phosphoprotein</keyword>
<keyword id="KW-0656">Proto-oncogene</keyword>
<keyword id="KW-1185">Reference proteome</keyword>
<keyword id="KW-0796">Tight junction</keyword>
<keyword id="KW-0862">Zinc</keyword>
<keyword id="KW-0863">Zinc-finger</keyword>
<dbReference type="EMBL" id="BC090078">
    <property type="protein sequence ID" value="AAH90078.1"/>
    <property type="molecule type" value="mRNA"/>
</dbReference>
<dbReference type="RefSeq" id="NP_001012079.1">
    <property type="nucleotide sequence ID" value="NM_001012079.2"/>
</dbReference>
<dbReference type="SMR" id="Q5FVC2"/>
<dbReference type="BioGRID" id="259684">
    <property type="interactions" value="2"/>
</dbReference>
<dbReference type="DIP" id="DIP-48721N"/>
<dbReference type="FunCoup" id="Q5FVC2">
    <property type="interactions" value="2471"/>
</dbReference>
<dbReference type="IntAct" id="Q5FVC2">
    <property type="interactions" value="2"/>
</dbReference>
<dbReference type="STRING" id="10116.ENSRNOP00000027182"/>
<dbReference type="iPTMnet" id="Q5FVC2"/>
<dbReference type="PhosphoSitePlus" id="Q5FVC2"/>
<dbReference type="jPOST" id="Q5FVC2"/>
<dbReference type="PaxDb" id="10116-ENSRNOP00000027182"/>
<dbReference type="Ensembl" id="ENSRNOT00000027182.8">
    <property type="protein sequence ID" value="ENSRNOP00000027182.5"/>
    <property type="gene ID" value="ENSRNOG00000020027.9"/>
</dbReference>
<dbReference type="GeneID" id="310635"/>
<dbReference type="KEGG" id="rno:310635"/>
<dbReference type="AGR" id="RGD:1304659"/>
<dbReference type="CTD" id="9181"/>
<dbReference type="RGD" id="1304659">
    <property type="gene designation" value="Arhgef2"/>
</dbReference>
<dbReference type="eggNOG" id="KOG3520">
    <property type="taxonomic scope" value="Eukaryota"/>
</dbReference>
<dbReference type="GeneTree" id="ENSGT00940000158341"/>
<dbReference type="HOGENOM" id="CLU_002466_1_1_1"/>
<dbReference type="InParanoid" id="Q5FVC2"/>
<dbReference type="OrthoDB" id="28045at2759"/>
<dbReference type="PhylomeDB" id="Q5FVC2"/>
<dbReference type="TreeFam" id="TF325887"/>
<dbReference type="Reactome" id="R-RNO-193648">
    <property type="pathway name" value="NRAGE signals death through JNK"/>
</dbReference>
<dbReference type="Reactome" id="R-RNO-416482">
    <property type="pathway name" value="G alpha (12/13) signalling events"/>
</dbReference>
<dbReference type="Reactome" id="R-RNO-8980692">
    <property type="pathway name" value="RHOA GTPase cycle"/>
</dbReference>
<dbReference type="Reactome" id="R-RNO-9013026">
    <property type="pathway name" value="RHOB GTPase cycle"/>
</dbReference>
<dbReference type="PRO" id="PR:Q5FVC2"/>
<dbReference type="Proteomes" id="UP000002494">
    <property type="component" value="Chromosome 2"/>
</dbReference>
<dbReference type="Bgee" id="ENSRNOG00000020027">
    <property type="expression patterns" value="Expressed in lung and 19 other cell types or tissues"/>
</dbReference>
<dbReference type="ExpressionAtlas" id="Q5FVC2">
    <property type="expression patterns" value="baseline and differential"/>
</dbReference>
<dbReference type="GO" id="GO:0005923">
    <property type="term" value="C:bicellular tight junction"/>
    <property type="evidence" value="ECO:0007669"/>
    <property type="project" value="UniProtKB-SubCell"/>
</dbReference>
<dbReference type="GO" id="GO:0005737">
    <property type="term" value="C:cytoplasm"/>
    <property type="evidence" value="ECO:0000250"/>
    <property type="project" value="UniProtKB"/>
</dbReference>
<dbReference type="GO" id="GO:0031410">
    <property type="term" value="C:cytoplasmic vesicle"/>
    <property type="evidence" value="ECO:0007669"/>
    <property type="project" value="UniProtKB-KW"/>
</dbReference>
<dbReference type="GO" id="GO:0005856">
    <property type="term" value="C:cytoskeleton"/>
    <property type="evidence" value="ECO:0000250"/>
    <property type="project" value="UniProtKB"/>
</dbReference>
<dbReference type="GO" id="GO:0043198">
    <property type="term" value="C:dendritic shaft"/>
    <property type="evidence" value="ECO:0000266"/>
    <property type="project" value="RGD"/>
</dbReference>
<dbReference type="GO" id="GO:0098978">
    <property type="term" value="C:glutamatergic synapse"/>
    <property type="evidence" value="ECO:0000314"/>
    <property type="project" value="SynGO"/>
</dbReference>
<dbReference type="GO" id="GO:0005794">
    <property type="term" value="C:Golgi apparatus"/>
    <property type="evidence" value="ECO:0007669"/>
    <property type="project" value="UniProtKB-SubCell"/>
</dbReference>
<dbReference type="GO" id="GO:0005874">
    <property type="term" value="C:microtubule"/>
    <property type="evidence" value="ECO:0000250"/>
    <property type="project" value="UniProtKB"/>
</dbReference>
<dbReference type="GO" id="GO:0043025">
    <property type="term" value="C:neuronal cell body"/>
    <property type="evidence" value="ECO:0000266"/>
    <property type="project" value="RGD"/>
</dbReference>
<dbReference type="GO" id="GO:0002102">
    <property type="term" value="C:podosome"/>
    <property type="evidence" value="ECO:0000266"/>
    <property type="project" value="RGD"/>
</dbReference>
<dbReference type="GO" id="GO:0014069">
    <property type="term" value="C:postsynaptic density"/>
    <property type="evidence" value="ECO:0000266"/>
    <property type="project" value="RGD"/>
</dbReference>
<dbReference type="GO" id="GO:0099092">
    <property type="term" value="C:postsynaptic density, intracellular component"/>
    <property type="evidence" value="ECO:0000314"/>
    <property type="project" value="SynGO"/>
</dbReference>
<dbReference type="GO" id="GO:0032991">
    <property type="term" value="C:protein-containing complex"/>
    <property type="evidence" value="ECO:0000250"/>
    <property type="project" value="UniProtKB"/>
</dbReference>
<dbReference type="GO" id="GO:0032587">
    <property type="term" value="C:ruffle membrane"/>
    <property type="evidence" value="ECO:0000250"/>
    <property type="project" value="UniProtKB"/>
</dbReference>
<dbReference type="GO" id="GO:0005819">
    <property type="term" value="C:spindle"/>
    <property type="evidence" value="ECO:0007669"/>
    <property type="project" value="UniProtKB-SubCell"/>
</dbReference>
<dbReference type="GO" id="GO:0031982">
    <property type="term" value="C:vesicle"/>
    <property type="evidence" value="ECO:0000250"/>
    <property type="project" value="UniProtKB"/>
</dbReference>
<dbReference type="GO" id="GO:0005085">
    <property type="term" value="F:guanyl-nucleotide exchange factor activity"/>
    <property type="evidence" value="ECO:0000250"/>
    <property type="project" value="UniProtKB"/>
</dbReference>
<dbReference type="GO" id="GO:0008017">
    <property type="term" value="F:microtubule binding"/>
    <property type="evidence" value="ECO:0000250"/>
    <property type="project" value="UniProtKB"/>
</dbReference>
<dbReference type="GO" id="GO:0031267">
    <property type="term" value="F:small GTPase binding"/>
    <property type="evidence" value="ECO:0000250"/>
    <property type="project" value="UniProtKB"/>
</dbReference>
<dbReference type="GO" id="GO:0008270">
    <property type="term" value="F:zinc ion binding"/>
    <property type="evidence" value="ECO:0007669"/>
    <property type="project" value="UniProtKB-KW"/>
</dbReference>
<dbReference type="GO" id="GO:0007015">
    <property type="term" value="P:actin filament organization"/>
    <property type="evidence" value="ECO:0000250"/>
    <property type="project" value="UniProtKB"/>
</dbReference>
<dbReference type="GO" id="GO:0055059">
    <property type="term" value="P:asymmetric neuroblast division"/>
    <property type="evidence" value="ECO:0000250"/>
    <property type="project" value="UniProtKB"/>
</dbReference>
<dbReference type="GO" id="GO:0000902">
    <property type="term" value="P:cell morphogenesis"/>
    <property type="evidence" value="ECO:0000250"/>
    <property type="project" value="UniProtKB"/>
</dbReference>
<dbReference type="GO" id="GO:0071474">
    <property type="term" value="P:cellular hyperosmotic response"/>
    <property type="evidence" value="ECO:0000266"/>
    <property type="project" value="RGD"/>
</dbReference>
<dbReference type="GO" id="GO:0071225">
    <property type="term" value="P:cellular response to muramyl dipeptide"/>
    <property type="evidence" value="ECO:0000250"/>
    <property type="project" value="UniProtKB"/>
</dbReference>
<dbReference type="GO" id="GO:0071356">
    <property type="term" value="P:cellular response to tumor necrosis factor"/>
    <property type="evidence" value="ECO:0000266"/>
    <property type="project" value="RGD"/>
</dbReference>
<dbReference type="GO" id="GO:0000132">
    <property type="term" value="P:establishment of mitotic spindle orientation"/>
    <property type="evidence" value="ECO:0000266"/>
    <property type="project" value="RGD"/>
</dbReference>
<dbReference type="GO" id="GO:0045087">
    <property type="term" value="P:innate immune response"/>
    <property type="evidence" value="ECO:0007669"/>
    <property type="project" value="UniProtKB-KW"/>
</dbReference>
<dbReference type="GO" id="GO:1902042">
    <property type="term" value="P:negative regulation of extrinsic apoptotic signaling pathway via death domain receptors"/>
    <property type="evidence" value="ECO:0000266"/>
    <property type="project" value="RGD"/>
</dbReference>
<dbReference type="GO" id="GO:1902219">
    <property type="term" value="P:negative regulation of intrinsic apoptotic signaling pathway in response to osmotic stress"/>
    <property type="evidence" value="ECO:0000266"/>
    <property type="project" value="RGD"/>
</dbReference>
<dbReference type="GO" id="GO:0007026">
    <property type="term" value="P:negative regulation of microtubule depolymerization"/>
    <property type="evidence" value="ECO:0000250"/>
    <property type="project" value="UniProtKB"/>
</dbReference>
<dbReference type="GO" id="GO:0060546">
    <property type="term" value="P:negative regulation of necroptotic process"/>
    <property type="evidence" value="ECO:0000266"/>
    <property type="project" value="RGD"/>
</dbReference>
<dbReference type="GO" id="GO:0050768">
    <property type="term" value="P:negative regulation of neurogenesis"/>
    <property type="evidence" value="ECO:0000266"/>
    <property type="project" value="RGD"/>
</dbReference>
<dbReference type="GO" id="GO:0071802">
    <property type="term" value="P:negative regulation of podosome assembly"/>
    <property type="evidence" value="ECO:0000266"/>
    <property type="project" value="RGD"/>
</dbReference>
<dbReference type="GO" id="GO:0045742">
    <property type="term" value="P:positive regulation of epidermal growth factor receptor signaling pathway"/>
    <property type="evidence" value="ECO:0000266"/>
    <property type="project" value="RGD"/>
</dbReference>
<dbReference type="GO" id="GO:0070374">
    <property type="term" value="P:positive regulation of ERK1 and ERK2 cascade"/>
    <property type="evidence" value="ECO:0000266"/>
    <property type="project" value="RGD"/>
</dbReference>
<dbReference type="GO" id="GO:0032755">
    <property type="term" value="P:positive regulation of interleukin-6 production"/>
    <property type="evidence" value="ECO:0000250"/>
    <property type="project" value="UniProtKB"/>
</dbReference>
<dbReference type="GO" id="GO:0045666">
    <property type="term" value="P:positive regulation of neuron differentiation"/>
    <property type="evidence" value="ECO:0000250"/>
    <property type="project" value="UniProtKB"/>
</dbReference>
<dbReference type="GO" id="GO:2001224">
    <property type="term" value="P:positive regulation of neuron migration"/>
    <property type="evidence" value="ECO:0000250"/>
    <property type="project" value="UniProtKB"/>
</dbReference>
<dbReference type="GO" id="GO:0051092">
    <property type="term" value="P:positive regulation of NF-kappaB transcription factor activity"/>
    <property type="evidence" value="ECO:0000250"/>
    <property type="project" value="UniProtKB"/>
</dbReference>
<dbReference type="GO" id="GO:1900745">
    <property type="term" value="P:positive regulation of p38MAPK cascade"/>
    <property type="evidence" value="ECO:0000266"/>
    <property type="project" value="RGD"/>
</dbReference>
<dbReference type="GO" id="GO:0050731">
    <property type="term" value="P:positive regulation of peptidyl-tyrosine phosphorylation"/>
    <property type="evidence" value="ECO:0000250"/>
    <property type="project" value="UniProtKB"/>
</dbReference>
<dbReference type="GO" id="GO:0035022">
    <property type="term" value="P:positive regulation of Rac protein signal transduction"/>
    <property type="evidence" value="ECO:0000266"/>
    <property type="project" value="RGD"/>
</dbReference>
<dbReference type="GO" id="GO:0045944">
    <property type="term" value="P:positive regulation of transcription by RNA polymerase II"/>
    <property type="evidence" value="ECO:0000250"/>
    <property type="project" value="UniProtKB"/>
</dbReference>
<dbReference type="GO" id="GO:0032760">
    <property type="term" value="P:positive regulation of tumor necrosis factor production"/>
    <property type="evidence" value="ECO:0000250"/>
    <property type="project" value="UniProtKB"/>
</dbReference>
<dbReference type="GO" id="GO:0090303">
    <property type="term" value="P:positive regulation of wound healing"/>
    <property type="evidence" value="ECO:0000266"/>
    <property type="project" value="RGD"/>
</dbReference>
<dbReference type="GO" id="GO:0035023">
    <property type="term" value="P:regulation of Rho protein signal transduction"/>
    <property type="evidence" value="ECO:0000266"/>
    <property type="project" value="RGD"/>
</dbReference>
<dbReference type="GO" id="GO:0033209">
    <property type="term" value="P:tumor necrosis factor-mediated signaling pathway"/>
    <property type="evidence" value="ECO:0000266"/>
    <property type="project" value="RGD"/>
</dbReference>
<dbReference type="CDD" id="cd20877">
    <property type="entry name" value="C1_ARHGEF2"/>
    <property type="match status" value="1"/>
</dbReference>
<dbReference type="CDD" id="cd13393">
    <property type="entry name" value="PH_ARHGEF2"/>
    <property type="match status" value="1"/>
</dbReference>
<dbReference type="CDD" id="cd00160">
    <property type="entry name" value="RhoGEF"/>
    <property type="match status" value="1"/>
</dbReference>
<dbReference type="FunFam" id="1.20.900.10:FF:000004">
    <property type="entry name" value="Rho guanine nucleotide exchange factor 2"/>
    <property type="match status" value="1"/>
</dbReference>
<dbReference type="FunFam" id="2.30.29.30:FF:000021">
    <property type="entry name" value="Rho guanine nucleotide exchange factor 2"/>
    <property type="match status" value="1"/>
</dbReference>
<dbReference type="FunFam" id="3.30.60.20:FF:000032">
    <property type="entry name" value="rho guanine nucleotide exchange factor 2 isoform X2"/>
    <property type="match status" value="1"/>
</dbReference>
<dbReference type="Gene3D" id="3.30.60.20">
    <property type="match status" value="1"/>
</dbReference>
<dbReference type="Gene3D" id="1.20.900.10">
    <property type="entry name" value="Dbl homology (DH) domain"/>
    <property type="match status" value="1"/>
</dbReference>
<dbReference type="Gene3D" id="2.30.29.30">
    <property type="entry name" value="Pleckstrin-homology domain (PH domain)/Phosphotyrosine-binding domain (PTB)"/>
    <property type="match status" value="1"/>
</dbReference>
<dbReference type="InterPro" id="IPR037806">
    <property type="entry name" value="ARHGEF2_PH"/>
</dbReference>
<dbReference type="InterPro" id="IPR046349">
    <property type="entry name" value="C1-like_sf"/>
</dbReference>
<dbReference type="InterPro" id="IPR035899">
    <property type="entry name" value="DBL_dom_sf"/>
</dbReference>
<dbReference type="InterPro" id="IPR000219">
    <property type="entry name" value="DH_dom"/>
</dbReference>
<dbReference type="InterPro" id="IPR002219">
    <property type="entry name" value="PE/DAG-bd"/>
</dbReference>
<dbReference type="InterPro" id="IPR011993">
    <property type="entry name" value="PH-like_dom_sf"/>
</dbReference>
<dbReference type="InterPro" id="IPR041020">
    <property type="entry name" value="PH_16"/>
</dbReference>
<dbReference type="InterPro" id="IPR001849">
    <property type="entry name" value="PH_domain"/>
</dbReference>
<dbReference type="InterPro" id="IPR051632">
    <property type="entry name" value="Rho_GEF"/>
</dbReference>
<dbReference type="PANTHER" id="PTHR13944">
    <property type="entry name" value="AGAP007712-PA"/>
    <property type="match status" value="1"/>
</dbReference>
<dbReference type="PANTHER" id="PTHR13944:SF20">
    <property type="entry name" value="RHO GUANINE NUCLEOTIDE EXCHANGE FACTOR 2"/>
    <property type="match status" value="1"/>
</dbReference>
<dbReference type="Pfam" id="PF17838">
    <property type="entry name" value="PH_16"/>
    <property type="match status" value="1"/>
</dbReference>
<dbReference type="Pfam" id="PF00621">
    <property type="entry name" value="RhoGEF"/>
    <property type="match status" value="1"/>
</dbReference>
<dbReference type="SMART" id="SM00109">
    <property type="entry name" value="C1"/>
    <property type="match status" value="1"/>
</dbReference>
<dbReference type="SMART" id="SM00233">
    <property type="entry name" value="PH"/>
    <property type="match status" value="1"/>
</dbReference>
<dbReference type="SMART" id="SM00325">
    <property type="entry name" value="RhoGEF"/>
    <property type="match status" value="1"/>
</dbReference>
<dbReference type="SUPFAM" id="SSF57889">
    <property type="entry name" value="Cysteine-rich domain"/>
    <property type="match status" value="1"/>
</dbReference>
<dbReference type="SUPFAM" id="SSF48065">
    <property type="entry name" value="DBL homology domain (DH-domain)"/>
    <property type="match status" value="1"/>
</dbReference>
<dbReference type="SUPFAM" id="SSF50729">
    <property type="entry name" value="PH domain-like"/>
    <property type="match status" value="1"/>
</dbReference>
<dbReference type="PROSITE" id="PS50010">
    <property type="entry name" value="DH_2"/>
    <property type="match status" value="1"/>
</dbReference>
<dbReference type="PROSITE" id="PS50003">
    <property type="entry name" value="PH_DOMAIN"/>
    <property type="match status" value="1"/>
</dbReference>
<dbReference type="PROSITE" id="PS00479">
    <property type="entry name" value="ZF_DAG_PE_1"/>
    <property type="match status" value="1"/>
</dbReference>
<dbReference type="PROSITE" id="PS50081">
    <property type="entry name" value="ZF_DAG_PE_2"/>
    <property type="match status" value="1"/>
</dbReference>
<organism>
    <name type="scientific">Rattus norvegicus</name>
    <name type="common">Rat</name>
    <dbReference type="NCBI Taxonomy" id="10116"/>
    <lineage>
        <taxon>Eukaryota</taxon>
        <taxon>Metazoa</taxon>
        <taxon>Chordata</taxon>
        <taxon>Craniata</taxon>
        <taxon>Vertebrata</taxon>
        <taxon>Euteleostomi</taxon>
        <taxon>Mammalia</taxon>
        <taxon>Eutheria</taxon>
        <taxon>Euarchontoglires</taxon>
        <taxon>Glires</taxon>
        <taxon>Rodentia</taxon>
        <taxon>Myomorpha</taxon>
        <taxon>Muroidea</taxon>
        <taxon>Muridae</taxon>
        <taxon>Murinae</taxon>
        <taxon>Rattus</taxon>
    </lineage>
</organism>
<proteinExistence type="evidence at protein level"/>
<gene>
    <name type="primary">Arhgef2</name>
</gene>
<protein>
    <recommendedName>
        <fullName>Rho guanine nucleotide exchange factor 2</fullName>
    </recommendedName>
    <alternativeName>
        <fullName>Guanine nucleotide exchange factor H1</fullName>
        <shortName>GEF-H1</shortName>
    </alternativeName>
</protein>
<sequence>MSRIESLTRARIDRSKEQATKTREKEKMKEAKDARYTNGHLFTTISVSGMTMCYACNKSITAKEALICPTCNVTIHNRCKDTLANCTKVKQKQQKAALLRNNTALQSVSLRSKTTTRERPTSAIYPSDSFRQSLLGSRRGLSSLSLAKSVSTTNIAGHFNDESPLGLRQILSQSTDSLNMRNRTLSVESLIDEGVEVFYNELMSDFEMDEKDFEADSWSLAVDSSFLQQHKKEVMKKQDVIYELIQTELHHVRTLKIMTRLFRTGMLEELQMEPEVVQGLFPCVDELSDIHTRFLSQLLERRRQALCPGSTRNFVIHRLGDLLISQFSGSNAEQMRKTYSEFCSRHTKALKLYKELYARDKRFQQFIRKMTRSAVLKRHGVQECILLVTQRITKYPVLINRILQNSHGIEEEYQDLAAALGLVKELLSNVDQDVHELEKEARLQEIYNRMDPRAQTPVPGKGPFGRDELLRRKLIHDGCLLWKTATGRFKDVLLLLMTDVLVFLQEKDQKYIFTSLDKPSVVSLQNLIVRDIANQAKGMFLISSGPPEMYEVHAASRDDRTTWIRVIQQSVRLCPSREDFPLIETEDKAYLRRIKTKLQQKNQALVELLQMNVELFAEMVHFQALKAGFIGMPPPTLPRGLFRLESFESLRGERLLKDALREVEGLKDLLLGPCVDLPLTAREPALPVEADSGSCPGVTANGEARTFNGSIELCRADSDSSQKDRNGNQLRSPQEEALQPLVNLYGLLQGLQAVVVQQERLMEALFPEGPERWEKLSRANSRDGEAGRAAVASVTPEKQATELALLQRQHSLLQEELRRCQRLGEERATEAGSLEARLRESEQARALLEREAEEIRRQLAALGQNEPLPAEAPWARRPLDPRRRSLPAGDALYLSFNPPQPSRGHDRLDLPVTVRSLHRPFDDREAQELGSPEDRLQDSSDPDTCSEEEVSSRLSPPHSPRDFTRMQDIPEETESRDGEPTASES</sequence>
<comment type="function">
    <text evidence="2 3">Activates Rho-GTPases by promoting the exchange of GDP for GTP. May be involved in epithelial barrier permeability, cell motility and polarization, dendritic spine morphology, antigen presentation, leukemic cell differentiation, cell cycle regulation, innate immune response, and cancer. Binds Rac-GTPases, but does not seem to promote nucleotide exchange activity toward Rac-GTPases. May stimulate instead the cortical activity of Rac. Inactive toward CDC42, TC10, or Ras-GTPases. Forms an intracellular sensing system along with NOD1 for the detection of microbial effectors during cell invasion by pathogens. Involved in innate immune signaling transduction pathway promoting cytokine IL6/interleukin-6 and TNF-alpha secretion in macrophage upon stimulation by bacterial peptidoglycans; acts as a signaling intermediate between NOD2 receptor and RIPK2 kinase. Contributes to the tyrosine phosphorylation of RIPK2 through Src tyrosine kinase leading to NF-kappaB activation by NOD2. Overexpression activates Rho-, but not Rac-GTPases, and increases paracellular permeability. Involved in neuronal progenitor cell division and differentiation. Involved in the migration of precerebellar neurons.</text>
</comment>
<comment type="subunit">
    <text evidence="1 3">Found in a complex composed at least of ARHGEF2, NOD2 and RIPK2. Interacts with RIPK2; the interaction mediates tyrosine phosphorylation of RIPK2 by Src kinase CSK. Interacts with RIPK1 and RIPK3. Interacts with YWHAZ/14-3-3 zeta; when phosphorylated at Ser-885. Interacts with the kinases PAK4, AURKA and MAPK1. Interacts with RHOA and RAC1. Interacts with NOD1 (By similarity). Interacts (via the N- terminal zinc finger) with CAPN6 (via domain II). Interacts with DYNLT1 (By similarity).</text>
</comment>
<comment type="interaction">
    <interactant intactId="EBI-15756732">
        <id>Q5FVC2</id>
    </interactant>
    <interactant intactId="EBI-371642">
        <id>P19490</id>
        <label>Gria1</label>
    </interactant>
    <organismsDiffer>false</organismsDiffer>
    <experiments>4</experiments>
</comment>
<comment type="subcellular location">
    <subcellularLocation>
        <location evidence="3 4">Cytoplasm</location>
        <location evidence="3 4">Cytoskeleton</location>
    </subcellularLocation>
    <subcellularLocation>
        <location evidence="3 4">Cytoplasm</location>
    </subcellularLocation>
    <subcellularLocation>
        <location evidence="3 4">Cell junction</location>
        <location evidence="3 4">Tight junction</location>
    </subcellularLocation>
    <subcellularLocation>
        <location evidence="4">Golgi apparatus</location>
    </subcellularLocation>
    <subcellularLocation>
        <location evidence="3 4">Cytoplasm</location>
        <location evidence="3 4">Cytoskeleton</location>
        <location evidence="3 4">Spindle</location>
    </subcellularLocation>
    <subcellularLocation>
        <location evidence="4">Cytoplasmic vesicle</location>
    </subcellularLocation>
    <text evidence="4">Localizes to the tips of cortical microtubules of the mitotic spindle during cell division, and is further released upon microtubule depolymerization. Colocalized with NOD2 and RIPK2 in vesicles and with the cytoskeleton.</text>
</comment>
<comment type="domain">
    <text evidence="1">The DH (DBL-homology) domain promotes tyrosine phosphorylation of RIPK2 (By similarity). The DH (DBL-homology) domain interacts with and promotes loading of GTP on RhoA.</text>
</comment>
<comment type="domain">
    <text evidence="4">The PH domain has no affinity for phosphoinositides suggesting that it does not interact directly with membranes.</text>
</comment>
<comment type="domain">
    <text evidence="4">The phorbol-ester/DAG-type zinc-finger and the C-terminal coiled-coil domains (606-986) are both important for association with microtubules.</text>
</comment>
<comment type="PTM">
    <text evidence="1">Phosphorylation of Ser-885 by PAK1 induces binding to protein YWHAZ, promoting its relocation to microtubules and the inhibition of its activity. Phosphorylated by AURKA and CDK1 during mitosis, which negatively regulates its activity. Phosphorylation by MAPK1 or MAPK3 increases nucleotide exchange activity. Phosphorylation by PAK4 releases GEF-H1 from the microtubules. Phosphorylated on serine, threonine and tyrosine residues in a RIPK2-dependent manner (By similarity).</text>
</comment>
<reference key="1">
    <citation type="journal article" date="2004" name="Genome Res.">
        <title>The status, quality, and expansion of the NIH full-length cDNA project: the Mammalian Gene Collection (MGC).</title>
        <authorList>
            <consortium name="The MGC Project Team"/>
        </authorList>
    </citation>
    <scope>NUCLEOTIDE SEQUENCE [LARGE SCALE MRNA]</scope>
    <source>
        <tissue>Lung</tissue>
    </source>
</reference>
<reference key="2">
    <citation type="journal article" date="2008" name="Trends Cell Biol.">
        <title>Cellular functions of GEF-H1, a microtubule-regulated Rho-GEF: is altered GEF-H1 activity a crucial determinant of disease pathogenesis?</title>
        <authorList>
            <person name="Birkenfeld J."/>
            <person name="Nalbant P."/>
            <person name="Yoon S.-H."/>
            <person name="Bokoch G.M."/>
        </authorList>
    </citation>
    <scope>REVIEW ON FUNCTION</scope>
</reference>
<reference key="3">
    <citation type="journal article" date="2012" name="Nat. Commun.">
        <title>Quantitative maps of protein phosphorylation sites across 14 different rat organs and tissues.</title>
        <authorList>
            <person name="Lundby A."/>
            <person name="Secher A."/>
            <person name="Lage K."/>
            <person name="Nordsborg N.B."/>
            <person name="Dmytriyev A."/>
            <person name="Lundby C."/>
            <person name="Olsen J.V."/>
        </authorList>
    </citation>
    <scope>PHOSPHORYLATION [LARGE SCALE ANALYSIS] AT SER-151; SER-174; SER-177; SER-646; SER-885; SER-931; SER-955 AND SER-959</scope>
    <scope>IDENTIFICATION BY MASS SPECTROMETRY [LARGE SCALE ANALYSIS]</scope>
</reference>
<name>ARHG2_RAT</name>
<accession>Q5FVC2</accession>
<evidence type="ECO:0000250" key="1"/>
<evidence type="ECO:0000250" key="2">
    <source>
        <dbReference type="UniProtKB" id="Q60875"/>
    </source>
</evidence>
<evidence type="ECO:0000250" key="3">
    <source>
        <dbReference type="UniProtKB" id="Q865S3"/>
    </source>
</evidence>
<evidence type="ECO:0000250" key="4">
    <source>
        <dbReference type="UniProtKB" id="Q92974"/>
    </source>
</evidence>
<evidence type="ECO:0000255" key="5"/>
<evidence type="ECO:0000255" key="6">
    <source>
        <dbReference type="PROSITE-ProRule" id="PRU00062"/>
    </source>
</evidence>
<evidence type="ECO:0000255" key="7">
    <source>
        <dbReference type="PROSITE-ProRule" id="PRU00145"/>
    </source>
</evidence>
<evidence type="ECO:0000255" key="8">
    <source>
        <dbReference type="PROSITE-ProRule" id="PRU00226"/>
    </source>
</evidence>
<evidence type="ECO:0000256" key="9">
    <source>
        <dbReference type="SAM" id="MobiDB-lite"/>
    </source>
</evidence>
<evidence type="ECO:0007744" key="10">
    <source>
    </source>
</evidence>